<keyword id="KW-0520">NAD</keyword>
<keyword id="KW-0560">Oxidoreductase</keyword>
<organism>
    <name type="scientific">Staphylococcus aureus (strain Mu3 / ATCC 700698)</name>
    <dbReference type="NCBI Taxonomy" id="418127"/>
    <lineage>
        <taxon>Bacteria</taxon>
        <taxon>Bacillati</taxon>
        <taxon>Bacillota</taxon>
        <taxon>Bacilli</taxon>
        <taxon>Bacillales</taxon>
        <taxon>Staphylococcaceae</taxon>
        <taxon>Staphylococcus</taxon>
    </lineage>
</organism>
<sequence>MVVEFKNEPGYDFSVQENVDMFKKALKDVEKELGQDIPLVINGEKIFKDDKIKSINPADTSQVIANASKATKQDVEDAFKAANEAYKSWKTWSANDRAELMLRVSAIIRRRKAEIAAIMVYEAGKPWDEAVGDAAEGIDFIEYYARSMMDLAQGKPVLDREGEHNKYFYKSIGTGVTIPPWNFPFAIMAGTTLAPVVAGNTVLLKPAEDTPYIAYKLMEILEEAGLPKGVVNFVPGDPKEIGDYLVDHKDTHFVTFTGSRATGTRIYERSAVVQEGQNFLKRVIAEMGGKDAIVVDENIDTDMAAEAIVTSAFGFSGQKCSACSRAIVHKDVYDEVLEKSIKLTKELTLGNTVDNTYMGPVINKKQFDKIKNYIEIGKEEGKLEQGGGTDDSKGYFVEPTIISGLKSKDRIMQEEIFGPVVGFVKVNDFDEAIEVANDTDYGLTGAVITNNREHWIKAVNEFDVGNLYLNRGCTSAVVGYHPFGGFKMSGTDAKTGSPDYLLHFLEQKVVSEMF</sequence>
<gene>
    <name evidence="1" type="primary">rocA</name>
    <name type="ordered locus">SAHV_2538</name>
</gene>
<evidence type="ECO:0000255" key="1">
    <source>
        <dbReference type="HAMAP-Rule" id="MF_00733"/>
    </source>
</evidence>
<name>ROCA_STAA1</name>
<feature type="chain" id="PRO_1000045972" description="1-pyrroline-5-carboxylate dehydrogenase">
    <location>
        <begin position="1"/>
        <end position="514"/>
    </location>
</feature>
<feature type="active site" evidence="1">
    <location>
        <position position="286"/>
    </location>
</feature>
<feature type="active site" evidence="1">
    <location>
        <position position="320"/>
    </location>
</feature>
<protein>
    <recommendedName>
        <fullName evidence="1">1-pyrroline-5-carboxylate dehydrogenase</fullName>
        <shortName evidence="1">P5C dehydrogenase</shortName>
        <ecNumber evidence="1">1.2.1.88</ecNumber>
    </recommendedName>
    <alternativeName>
        <fullName evidence="1">L-glutamate gamma-semialdehyde dehydrogenase</fullName>
    </alternativeName>
</protein>
<accession>A7X6R7</accession>
<proteinExistence type="inferred from homology"/>
<dbReference type="EC" id="1.2.1.88" evidence="1"/>
<dbReference type="EMBL" id="AP009324">
    <property type="protein sequence ID" value="BAF79421.1"/>
    <property type="molecule type" value="Genomic_DNA"/>
</dbReference>
<dbReference type="SMR" id="A7X6R7"/>
<dbReference type="KEGG" id="saw:SAHV_2538"/>
<dbReference type="HOGENOM" id="CLU_005391_0_0_9"/>
<dbReference type="UniPathway" id="UPA00261">
    <property type="reaction ID" value="UER00374"/>
</dbReference>
<dbReference type="GO" id="GO:0009898">
    <property type="term" value="C:cytoplasmic side of plasma membrane"/>
    <property type="evidence" value="ECO:0007669"/>
    <property type="project" value="TreeGrafter"/>
</dbReference>
<dbReference type="GO" id="GO:0003842">
    <property type="term" value="F:1-pyrroline-5-carboxylate dehydrogenase activity"/>
    <property type="evidence" value="ECO:0007669"/>
    <property type="project" value="UniProtKB-UniRule"/>
</dbReference>
<dbReference type="GO" id="GO:0006537">
    <property type="term" value="P:glutamate biosynthetic process"/>
    <property type="evidence" value="ECO:0007669"/>
    <property type="project" value="UniProtKB-UniRule"/>
</dbReference>
<dbReference type="GO" id="GO:0010133">
    <property type="term" value="P:proline catabolic process to glutamate"/>
    <property type="evidence" value="ECO:0007669"/>
    <property type="project" value="UniProtKB-UniPathway"/>
</dbReference>
<dbReference type="CDD" id="cd07124">
    <property type="entry name" value="ALDH_PutA-P5CDH-RocA"/>
    <property type="match status" value="1"/>
</dbReference>
<dbReference type="FunFam" id="3.40.309.10:FF:000005">
    <property type="entry name" value="1-pyrroline-5-carboxylate dehydrogenase 1"/>
    <property type="match status" value="1"/>
</dbReference>
<dbReference type="FunFam" id="3.40.605.10:FF:000045">
    <property type="entry name" value="1-pyrroline-5-carboxylate dehydrogenase 1"/>
    <property type="match status" value="1"/>
</dbReference>
<dbReference type="Gene3D" id="3.40.605.10">
    <property type="entry name" value="Aldehyde Dehydrogenase, Chain A, domain 1"/>
    <property type="match status" value="1"/>
</dbReference>
<dbReference type="Gene3D" id="3.40.309.10">
    <property type="entry name" value="Aldehyde Dehydrogenase, Chain A, domain 2"/>
    <property type="match status" value="1"/>
</dbReference>
<dbReference type="HAMAP" id="MF_00733">
    <property type="entry name" value="RocA"/>
    <property type="match status" value="1"/>
</dbReference>
<dbReference type="InterPro" id="IPR016161">
    <property type="entry name" value="Ald_DH/histidinol_DH"/>
</dbReference>
<dbReference type="InterPro" id="IPR016163">
    <property type="entry name" value="Ald_DH_C"/>
</dbReference>
<dbReference type="InterPro" id="IPR016160">
    <property type="entry name" value="Ald_DH_CS_CYS"/>
</dbReference>
<dbReference type="InterPro" id="IPR029510">
    <property type="entry name" value="Ald_DH_CS_GLU"/>
</dbReference>
<dbReference type="InterPro" id="IPR016162">
    <property type="entry name" value="Ald_DH_N"/>
</dbReference>
<dbReference type="InterPro" id="IPR015590">
    <property type="entry name" value="Aldehyde_DH_dom"/>
</dbReference>
<dbReference type="InterPro" id="IPR050485">
    <property type="entry name" value="Proline_metab_enzyme"/>
</dbReference>
<dbReference type="InterPro" id="IPR005932">
    <property type="entry name" value="RocA"/>
</dbReference>
<dbReference type="InterPro" id="IPR047597">
    <property type="entry name" value="RocA_bacillales"/>
</dbReference>
<dbReference type="NCBIfam" id="TIGR01237">
    <property type="entry name" value="D1pyr5carbox2"/>
    <property type="match status" value="1"/>
</dbReference>
<dbReference type="NCBIfam" id="NF002852">
    <property type="entry name" value="PRK03137.1"/>
    <property type="match status" value="1"/>
</dbReference>
<dbReference type="PANTHER" id="PTHR42862">
    <property type="entry name" value="DELTA-1-PYRROLINE-5-CARBOXYLATE DEHYDROGENASE 1, ISOFORM A-RELATED"/>
    <property type="match status" value="1"/>
</dbReference>
<dbReference type="PANTHER" id="PTHR42862:SF1">
    <property type="entry name" value="DELTA-1-PYRROLINE-5-CARBOXYLATE DEHYDROGENASE 2, ISOFORM A-RELATED"/>
    <property type="match status" value="1"/>
</dbReference>
<dbReference type="Pfam" id="PF00171">
    <property type="entry name" value="Aldedh"/>
    <property type="match status" value="1"/>
</dbReference>
<dbReference type="SUPFAM" id="SSF53720">
    <property type="entry name" value="ALDH-like"/>
    <property type="match status" value="1"/>
</dbReference>
<dbReference type="PROSITE" id="PS00070">
    <property type="entry name" value="ALDEHYDE_DEHYDR_CYS"/>
    <property type="match status" value="1"/>
</dbReference>
<dbReference type="PROSITE" id="PS00687">
    <property type="entry name" value="ALDEHYDE_DEHYDR_GLU"/>
    <property type="match status" value="1"/>
</dbReference>
<reference key="1">
    <citation type="journal article" date="2008" name="Antimicrob. Agents Chemother.">
        <title>Mutated response regulator graR is responsible for phenotypic conversion of Staphylococcus aureus from heterogeneous vancomycin-intermediate resistance to vancomycin-intermediate resistance.</title>
        <authorList>
            <person name="Neoh H.-M."/>
            <person name="Cui L."/>
            <person name="Yuzawa H."/>
            <person name="Takeuchi F."/>
            <person name="Matsuo M."/>
            <person name="Hiramatsu K."/>
        </authorList>
    </citation>
    <scope>NUCLEOTIDE SEQUENCE [LARGE SCALE GENOMIC DNA]</scope>
    <source>
        <strain>Mu3 / ATCC 700698</strain>
    </source>
</reference>
<comment type="catalytic activity">
    <reaction evidence="1">
        <text>L-glutamate 5-semialdehyde + NAD(+) + H2O = L-glutamate + NADH + 2 H(+)</text>
        <dbReference type="Rhea" id="RHEA:30235"/>
        <dbReference type="ChEBI" id="CHEBI:15377"/>
        <dbReference type="ChEBI" id="CHEBI:15378"/>
        <dbReference type="ChEBI" id="CHEBI:29985"/>
        <dbReference type="ChEBI" id="CHEBI:57540"/>
        <dbReference type="ChEBI" id="CHEBI:57945"/>
        <dbReference type="ChEBI" id="CHEBI:58066"/>
        <dbReference type="EC" id="1.2.1.88"/>
    </reaction>
</comment>
<comment type="pathway">
    <text evidence="1">Amino-acid degradation; L-proline degradation into L-glutamate; L-glutamate from L-proline: step 2/2.</text>
</comment>
<comment type="similarity">
    <text evidence="1">Belongs to the aldehyde dehydrogenase family. RocA subfamily.</text>
</comment>